<feature type="chain" id="PRO_0000293207" description="Small ribosomal subunit protein uS5">
    <location>
        <begin position="1"/>
        <end position="213"/>
    </location>
</feature>
<feature type="domain" description="S5 DRBM" evidence="1">
    <location>
        <begin position="54"/>
        <end position="117"/>
    </location>
</feature>
<evidence type="ECO:0000255" key="1">
    <source>
        <dbReference type="HAMAP-Rule" id="MF_01307"/>
    </source>
</evidence>
<evidence type="ECO:0000305" key="2"/>
<comment type="function">
    <text evidence="1">With S4 and S12 plays an important role in translational accuracy.</text>
</comment>
<comment type="subunit">
    <text evidence="1">Part of the 30S ribosomal subunit. Contacts protein S4.</text>
</comment>
<comment type="domain">
    <text>The N-terminal domain interacts with the head of the 30S subunit; the C-terminal domain interacts with the body and contacts protein S4. The interaction surface between S4 and S5 is involved in control of translational fidelity.</text>
</comment>
<comment type="similarity">
    <text evidence="1">Belongs to the universal ribosomal protein uS5 family.</text>
</comment>
<organism>
    <name type="scientific">Hyperthermus butylicus (strain DSM 5456 / JCM 9403 / PLM1-5)</name>
    <dbReference type="NCBI Taxonomy" id="415426"/>
    <lineage>
        <taxon>Archaea</taxon>
        <taxon>Thermoproteota</taxon>
        <taxon>Thermoprotei</taxon>
        <taxon>Desulfurococcales</taxon>
        <taxon>Pyrodictiaceae</taxon>
        <taxon>Hyperthermus</taxon>
    </lineage>
</organism>
<proteinExistence type="inferred from homology"/>
<keyword id="KW-1185">Reference proteome</keyword>
<keyword id="KW-0687">Ribonucleoprotein</keyword>
<keyword id="KW-0689">Ribosomal protein</keyword>
<keyword id="KW-0694">RNA-binding</keyword>
<keyword id="KW-0699">rRNA-binding</keyword>
<accession>A2BMD9</accession>
<gene>
    <name evidence="1" type="primary">rps5</name>
    <name type="ordered locus">Hbut_1320</name>
</gene>
<name>RS5_HYPBU</name>
<dbReference type="EMBL" id="CP000493">
    <property type="protein sequence ID" value="ABM81150.1"/>
    <property type="molecule type" value="Genomic_DNA"/>
</dbReference>
<dbReference type="RefSeq" id="WP_011822468.1">
    <property type="nucleotide sequence ID" value="NC_008818.1"/>
</dbReference>
<dbReference type="SMR" id="A2BMD9"/>
<dbReference type="STRING" id="415426.Hbut_1320"/>
<dbReference type="EnsemblBacteria" id="ABM81150">
    <property type="protein sequence ID" value="ABM81150"/>
    <property type="gene ID" value="Hbut_1320"/>
</dbReference>
<dbReference type="GeneID" id="4781621"/>
<dbReference type="KEGG" id="hbu:Hbut_1320"/>
<dbReference type="eggNOG" id="arCOG04087">
    <property type="taxonomic scope" value="Archaea"/>
</dbReference>
<dbReference type="HOGENOM" id="CLU_065898_0_1_2"/>
<dbReference type="OrthoDB" id="38155at2157"/>
<dbReference type="Proteomes" id="UP000002593">
    <property type="component" value="Chromosome"/>
</dbReference>
<dbReference type="GO" id="GO:0022627">
    <property type="term" value="C:cytosolic small ribosomal subunit"/>
    <property type="evidence" value="ECO:0007669"/>
    <property type="project" value="TreeGrafter"/>
</dbReference>
<dbReference type="GO" id="GO:0019843">
    <property type="term" value="F:rRNA binding"/>
    <property type="evidence" value="ECO:0007669"/>
    <property type="project" value="UniProtKB-UniRule"/>
</dbReference>
<dbReference type="GO" id="GO:0003735">
    <property type="term" value="F:structural constituent of ribosome"/>
    <property type="evidence" value="ECO:0007669"/>
    <property type="project" value="InterPro"/>
</dbReference>
<dbReference type="GO" id="GO:0006412">
    <property type="term" value="P:translation"/>
    <property type="evidence" value="ECO:0007669"/>
    <property type="project" value="UniProtKB-UniRule"/>
</dbReference>
<dbReference type="FunFam" id="3.30.160.20:FF:000002">
    <property type="entry name" value="40S ribosomal protein S2"/>
    <property type="match status" value="1"/>
</dbReference>
<dbReference type="FunFam" id="3.30.230.10:FF:000004">
    <property type="entry name" value="40S ribosomal protein S2"/>
    <property type="match status" value="1"/>
</dbReference>
<dbReference type="Gene3D" id="3.30.160.20">
    <property type="match status" value="1"/>
</dbReference>
<dbReference type="Gene3D" id="3.30.230.10">
    <property type="match status" value="1"/>
</dbReference>
<dbReference type="HAMAP" id="MF_01307_A">
    <property type="entry name" value="Ribosomal_uS5_A"/>
    <property type="match status" value="1"/>
</dbReference>
<dbReference type="InterPro" id="IPR020568">
    <property type="entry name" value="Ribosomal_Su5_D2-typ_SF"/>
</dbReference>
<dbReference type="InterPro" id="IPR000851">
    <property type="entry name" value="Ribosomal_uS5"/>
</dbReference>
<dbReference type="InterPro" id="IPR047866">
    <property type="entry name" value="Ribosomal_uS5_arc"/>
</dbReference>
<dbReference type="InterPro" id="IPR005324">
    <property type="entry name" value="Ribosomal_uS5_C"/>
</dbReference>
<dbReference type="InterPro" id="IPR005711">
    <property type="entry name" value="Ribosomal_uS5_euk/arc"/>
</dbReference>
<dbReference type="InterPro" id="IPR013810">
    <property type="entry name" value="Ribosomal_uS5_N"/>
</dbReference>
<dbReference type="InterPro" id="IPR018192">
    <property type="entry name" value="Ribosomal_uS5_N_CS"/>
</dbReference>
<dbReference type="InterPro" id="IPR014721">
    <property type="entry name" value="Ribsml_uS5_D2-typ_fold_subgr"/>
</dbReference>
<dbReference type="NCBIfam" id="NF003125">
    <property type="entry name" value="PRK04044.1"/>
    <property type="match status" value="1"/>
</dbReference>
<dbReference type="NCBIfam" id="TIGR01020">
    <property type="entry name" value="uS5_euk_arch"/>
    <property type="match status" value="1"/>
</dbReference>
<dbReference type="PANTHER" id="PTHR13718:SF4">
    <property type="entry name" value="40S RIBOSOMAL PROTEIN S2"/>
    <property type="match status" value="1"/>
</dbReference>
<dbReference type="PANTHER" id="PTHR13718">
    <property type="entry name" value="RIBOSOMAL S SUBUNIT"/>
    <property type="match status" value="1"/>
</dbReference>
<dbReference type="Pfam" id="PF00333">
    <property type="entry name" value="Ribosomal_S5"/>
    <property type="match status" value="1"/>
</dbReference>
<dbReference type="Pfam" id="PF03719">
    <property type="entry name" value="Ribosomal_S5_C"/>
    <property type="match status" value="1"/>
</dbReference>
<dbReference type="SUPFAM" id="SSF54768">
    <property type="entry name" value="dsRNA-binding domain-like"/>
    <property type="match status" value="1"/>
</dbReference>
<dbReference type="SUPFAM" id="SSF54211">
    <property type="entry name" value="Ribosomal protein S5 domain 2-like"/>
    <property type="match status" value="1"/>
</dbReference>
<dbReference type="PROSITE" id="PS00585">
    <property type="entry name" value="RIBOSOMAL_S5"/>
    <property type="match status" value="1"/>
</dbReference>
<dbReference type="PROSITE" id="PS50881">
    <property type="entry name" value="S5_DSRBD"/>
    <property type="match status" value="1"/>
</dbReference>
<protein>
    <recommendedName>
        <fullName evidence="1">Small ribosomal subunit protein uS5</fullName>
    </recommendedName>
    <alternativeName>
        <fullName evidence="2">30S ribosomal protein S5</fullName>
    </alternativeName>
</protein>
<reference key="1">
    <citation type="journal article" date="2007" name="Archaea">
        <title>The genome of Hyperthermus butylicus: a sulfur-reducing, peptide fermenting, neutrophilic Crenarchaeote growing up to 108 degrees C.</title>
        <authorList>
            <person name="Bruegger K."/>
            <person name="Chen L."/>
            <person name="Stark M."/>
            <person name="Zibat A."/>
            <person name="Redder P."/>
            <person name="Ruepp A."/>
            <person name="Awayez M."/>
            <person name="She Q."/>
            <person name="Garrett R.A."/>
            <person name="Klenk H.-P."/>
        </authorList>
    </citation>
    <scope>NUCLEOTIDE SEQUENCE [LARGE SCALE GENOMIC DNA]</scope>
    <source>
        <strain>DSM 5456 / JCM 9403 / PLM1-5</strain>
    </source>
</reference>
<sequence>MSLSPYELEQEWQPRTYVGRLVKEGRIRSLSEIFEKNLPILEPEIVDYLIGPELKSETVDVRLVQKMTDAGRINRFRVVVVIGNENGFVGVGQGKARQLAVAIEKAIRNAKLNIIPVRRGCGSWECLCSEPHSVPFTVRGKSGSVEVILKPAPRGTGLVAGDAAKVVLRLAGIRDVWSFTKGDTRTTINFVKATYNALKQTYKFVTPLDWART</sequence>